<sequence>MRSHGQQISDRLTVEVDCHSLGPSECPSMTSSFSPLDSPTPTPTSLYSQGSMASPGWPEPSHYHHGLPMERRTSATPLRSAFRMADLTSGEGMMNMPCGNMDRQEQMPLPDYLPGYDENVDQLWIPQDMPKTYQEPQFPYQASMPQYNQMARNYYHRPQQAGYLPESASNPCLSRPIFTQSTERMPNSASMSNMLGWMPSHESLVPQTITPAQVQPFPSGPVTPPSSSYSDFPANIPTFKTHTPSTPHRSVSMGTPSGSDTPVSRMSGHNDYQEDFQLSPVYREGMMQRHRQPSRKSSKKQLLRSNLSLENLPSIIKQVQFKCKEPGCKGRFKRQEHLKRHMKSHSKEKPHVCWIPGCHRAFSRSDNLNAHYTKTHSKRGGRNRYVATLDETSQDFDPDFRGQLTPDGRPIYGSKLEDTMPDCGELSVDGWDD</sequence>
<accession>B6GVZ2</accession>
<organism>
    <name type="scientific">Penicillium rubens (strain ATCC 28089 / DSM 1075 / NRRL 1951 / Wisconsin 54-1255)</name>
    <name type="common">Penicillium chrysogenum</name>
    <dbReference type="NCBI Taxonomy" id="500485"/>
    <lineage>
        <taxon>Eukaryota</taxon>
        <taxon>Fungi</taxon>
        <taxon>Dikarya</taxon>
        <taxon>Ascomycota</taxon>
        <taxon>Pezizomycotina</taxon>
        <taxon>Eurotiomycetes</taxon>
        <taxon>Eurotiomycetidae</taxon>
        <taxon>Eurotiales</taxon>
        <taxon>Aspergillaceae</taxon>
        <taxon>Penicillium</taxon>
        <taxon>Penicillium chrysogenum species complex</taxon>
    </lineage>
</organism>
<protein>
    <recommendedName>
        <fullName evidence="8">C2H2 type master regulator of conidiophore development brlA</fullName>
    </recommendedName>
</protein>
<reference key="1">
    <citation type="journal article" date="2008" name="Nat. Biotechnol.">
        <title>Genome sequencing and analysis of the filamentous fungus Penicillium chrysogenum.</title>
        <authorList>
            <person name="van den Berg M.A."/>
            <person name="Albang R."/>
            <person name="Albermann K."/>
            <person name="Badger J.H."/>
            <person name="Daran J.-M."/>
            <person name="Driessen A.J.M."/>
            <person name="Garcia-Estrada C."/>
            <person name="Fedorova N.D."/>
            <person name="Harris D.M."/>
            <person name="Heijne W.H.M."/>
            <person name="Joardar V.S."/>
            <person name="Kiel J.A.K.W."/>
            <person name="Kovalchuk A."/>
            <person name="Martin J.F."/>
            <person name="Nierman W.C."/>
            <person name="Nijland J.G."/>
            <person name="Pronk J.T."/>
            <person name="Roubos J.A."/>
            <person name="van der Klei I.J."/>
            <person name="van Peij N.N.M.E."/>
            <person name="Veenhuis M."/>
            <person name="von Doehren H."/>
            <person name="Wagner C."/>
            <person name="Wortman J.R."/>
            <person name="Bovenberg R.A.L."/>
        </authorList>
    </citation>
    <scope>NUCLEOTIDE SEQUENCE [LARGE SCALE GENOMIC DNA]</scope>
    <source>
        <strain>ATCC 28089 / DSM 1075 / NRRL 1951 / Wisconsin 54-1255</strain>
    </source>
</reference>
<reference key="2">
    <citation type="journal article" date="2008" name="Biochem. Cell Biol.">
        <title>Heterotrimeric Galpha protein Pga1 of Penicillium chrysogenum controls conidiation mainly by a cAMP-independent mechanism.</title>
        <authorList>
            <person name="Garcia-Rico R.O."/>
            <person name="Fierro F."/>
            <person name="Martin J.F."/>
        </authorList>
    </citation>
    <scope>INDUCTION</scope>
</reference>
<reference key="3">
    <citation type="journal article" date="2011" name="Appl. Environ. Microbiol.">
        <title>Among developmental regulators, StuA but not BrlA is essential for penicillin V production in Penicillium chrysogenum.</title>
        <authorList>
            <person name="Sigl C."/>
            <person name="Haas H."/>
            <person name="Specht T."/>
            <person name="Pfaller K."/>
            <person name="Kuernsteiner H."/>
            <person name="Zadra I."/>
        </authorList>
    </citation>
    <scope>FUNCTION</scope>
    <scope>INDUCTION</scope>
</reference>
<name>BRLA_PENRW</name>
<evidence type="ECO:0000250" key="1">
    <source>
        <dbReference type="UniProtKB" id="P10069"/>
    </source>
</evidence>
<evidence type="ECO:0000250" key="2">
    <source>
        <dbReference type="UniProtKB" id="P22022"/>
    </source>
</evidence>
<evidence type="ECO:0000255" key="3">
    <source>
        <dbReference type="PROSITE-ProRule" id="PRU00042"/>
    </source>
</evidence>
<evidence type="ECO:0000256" key="4">
    <source>
        <dbReference type="SAM" id="MobiDB-lite"/>
    </source>
</evidence>
<evidence type="ECO:0000269" key="5">
    <source>
    </source>
</evidence>
<evidence type="ECO:0000269" key="6">
    <source>
    </source>
</evidence>
<evidence type="ECO:0000303" key="7">
    <source>
    </source>
</evidence>
<evidence type="ECO:0000305" key="8"/>
<proteinExistence type="evidence at transcript level"/>
<gene>
    <name evidence="7" type="primary">brlA</name>
    <name type="ORF">Pc06g00470</name>
</gene>
<comment type="function">
    <text evidence="2 6">BrlA, abaA and wetA are pivotal regulators of conidiophore development and conidium maturation (By similarity). They act individually and together to regulate their own expression and that of numerous other sporulation-specific genes (By similarity). Binds promoters of target genes at brlA response elements (BREs) containing the conserved sequence 5'-(C/A)(A/G)AGGG(G/A)-3' (By similarity). Is not required for penicillin V production (PubMed:21148688).</text>
</comment>
<comment type="subcellular location">
    <subcellularLocation>
        <location evidence="1">Nucleus</location>
    </subcellularLocation>
</comment>
<comment type="induction">
    <text evidence="5 6">Expression is regulated by the heterotrimeric G protein pga1 (PubMed:18364746). Expression is also positively regulated by stuA (PubMed:21148688).</text>
</comment>
<dbReference type="EMBL" id="AM920421">
    <property type="protein sequence ID" value="CAP79040.1"/>
    <property type="molecule type" value="Genomic_DNA"/>
</dbReference>
<dbReference type="RefSeq" id="XP_002556662.1">
    <property type="nucleotide sequence ID" value="XM_002556616.1"/>
</dbReference>
<dbReference type="SMR" id="B6GVZ2"/>
<dbReference type="STRING" id="500485.B6GVZ2"/>
<dbReference type="GeneID" id="8315709"/>
<dbReference type="KEGG" id="pcs:N7525_010163"/>
<dbReference type="VEuPathDB" id="FungiDB:PCH_Pc06g00470"/>
<dbReference type="eggNOG" id="KOG1721">
    <property type="taxonomic scope" value="Eukaryota"/>
</dbReference>
<dbReference type="HOGENOM" id="CLU_655506_0_0_1"/>
<dbReference type="OMA" id="WMPSHES"/>
<dbReference type="OrthoDB" id="654211at2759"/>
<dbReference type="BioCyc" id="PCHR:PC06G00470-MONOMER"/>
<dbReference type="Proteomes" id="UP000000724">
    <property type="component" value="Contig Pc00c06"/>
</dbReference>
<dbReference type="GO" id="GO:0000785">
    <property type="term" value="C:chromatin"/>
    <property type="evidence" value="ECO:0007669"/>
    <property type="project" value="TreeGrafter"/>
</dbReference>
<dbReference type="GO" id="GO:0005634">
    <property type="term" value="C:nucleus"/>
    <property type="evidence" value="ECO:0007669"/>
    <property type="project" value="UniProtKB-SubCell"/>
</dbReference>
<dbReference type="GO" id="GO:0005667">
    <property type="term" value="C:transcription regulator complex"/>
    <property type="evidence" value="ECO:0007669"/>
    <property type="project" value="TreeGrafter"/>
</dbReference>
<dbReference type="GO" id="GO:0000981">
    <property type="term" value="F:DNA-binding transcription factor activity, RNA polymerase II-specific"/>
    <property type="evidence" value="ECO:0007669"/>
    <property type="project" value="TreeGrafter"/>
</dbReference>
<dbReference type="GO" id="GO:0000978">
    <property type="term" value="F:RNA polymerase II cis-regulatory region sequence-specific DNA binding"/>
    <property type="evidence" value="ECO:0007669"/>
    <property type="project" value="TreeGrafter"/>
</dbReference>
<dbReference type="GO" id="GO:0008270">
    <property type="term" value="F:zinc ion binding"/>
    <property type="evidence" value="ECO:0007669"/>
    <property type="project" value="UniProtKB-KW"/>
</dbReference>
<dbReference type="GO" id="GO:0048315">
    <property type="term" value="P:conidium formation"/>
    <property type="evidence" value="ECO:0007669"/>
    <property type="project" value="UniProtKB-KW"/>
</dbReference>
<dbReference type="GO" id="GO:0030435">
    <property type="term" value="P:sporulation resulting in formation of a cellular spore"/>
    <property type="evidence" value="ECO:0007669"/>
    <property type="project" value="UniProtKB-KW"/>
</dbReference>
<dbReference type="FunFam" id="3.30.160.60:FF:000845">
    <property type="entry name" value="C2H2 type conidiation transcription factor BrlA"/>
    <property type="match status" value="1"/>
</dbReference>
<dbReference type="Gene3D" id="3.30.160.60">
    <property type="entry name" value="Classic Zinc Finger"/>
    <property type="match status" value="2"/>
</dbReference>
<dbReference type="InterPro" id="IPR036236">
    <property type="entry name" value="Znf_C2H2_sf"/>
</dbReference>
<dbReference type="InterPro" id="IPR013087">
    <property type="entry name" value="Znf_C2H2_type"/>
</dbReference>
<dbReference type="PANTHER" id="PTHR14003">
    <property type="entry name" value="TRANSCRIPTIONAL REPRESSOR PROTEIN YY"/>
    <property type="match status" value="1"/>
</dbReference>
<dbReference type="PANTHER" id="PTHR14003:SF19">
    <property type="entry name" value="YY2 TRANSCRIPTION FACTOR"/>
    <property type="match status" value="1"/>
</dbReference>
<dbReference type="Pfam" id="PF00096">
    <property type="entry name" value="zf-C2H2"/>
    <property type="match status" value="2"/>
</dbReference>
<dbReference type="SMART" id="SM00355">
    <property type="entry name" value="ZnF_C2H2"/>
    <property type="match status" value="2"/>
</dbReference>
<dbReference type="SUPFAM" id="SSF57667">
    <property type="entry name" value="beta-beta-alpha zinc fingers"/>
    <property type="match status" value="1"/>
</dbReference>
<dbReference type="PROSITE" id="PS00028">
    <property type="entry name" value="ZINC_FINGER_C2H2_1"/>
    <property type="match status" value="2"/>
</dbReference>
<dbReference type="PROSITE" id="PS50157">
    <property type="entry name" value="ZINC_FINGER_C2H2_2"/>
    <property type="match status" value="2"/>
</dbReference>
<feature type="chain" id="PRO_0000435945" description="C2H2 type master regulator of conidiophore development brlA">
    <location>
        <begin position="1"/>
        <end position="433"/>
    </location>
</feature>
<feature type="zinc finger region" description="C2H2-type 1" evidence="3">
    <location>
        <begin position="321"/>
        <end position="345"/>
    </location>
</feature>
<feature type="zinc finger region" description="C2H2-type 2" evidence="3">
    <location>
        <begin position="351"/>
        <end position="376"/>
    </location>
</feature>
<feature type="region of interest" description="Disordered" evidence="4">
    <location>
        <begin position="23"/>
        <end position="64"/>
    </location>
</feature>
<feature type="region of interest" description="Disordered" evidence="4">
    <location>
        <begin position="240"/>
        <end position="265"/>
    </location>
</feature>
<feature type="region of interest" description="Disordered" evidence="4">
    <location>
        <begin position="391"/>
        <end position="416"/>
    </location>
</feature>
<feature type="compositionally biased region" description="Low complexity" evidence="4">
    <location>
        <begin position="30"/>
        <end position="48"/>
    </location>
</feature>
<feature type="compositionally biased region" description="Polar residues" evidence="4">
    <location>
        <begin position="240"/>
        <end position="264"/>
    </location>
</feature>
<keyword id="KW-0010">Activator</keyword>
<keyword id="KW-0183">Conidiation</keyword>
<keyword id="KW-0238">DNA-binding</keyword>
<keyword id="KW-0479">Metal-binding</keyword>
<keyword id="KW-0539">Nucleus</keyword>
<keyword id="KW-1185">Reference proteome</keyword>
<keyword id="KW-0677">Repeat</keyword>
<keyword id="KW-0749">Sporulation</keyword>
<keyword id="KW-0804">Transcription</keyword>
<keyword id="KW-0805">Transcription regulation</keyword>
<keyword id="KW-0862">Zinc</keyword>
<keyword id="KW-0863">Zinc-finger</keyword>